<evidence type="ECO:0000255" key="1">
    <source>
        <dbReference type="HAMAP-Rule" id="MF_00211"/>
    </source>
</evidence>
<protein>
    <recommendedName>
        <fullName evidence="1">Anthranilate phosphoribosyltransferase</fullName>
        <ecNumber evidence="1">2.4.2.18</ecNumber>
    </recommendedName>
</protein>
<accession>C3MPW2</accession>
<name>TRPD_SACI2</name>
<dbReference type="EC" id="2.4.2.18" evidence="1"/>
<dbReference type="EMBL" id="CP001399">
    <property type="protein sequence ID" value="ACP35425.1"/>
    <property type="molecule type" value="Genomic_DNA"/>
</dbReference>
<dbReference type="RefSeq" id="WP_012713680.1">
    <property type="nucleotide sequence ID" value="NC_012589.1"/>
</dbReference>
<dbReference type="SMR" id="C3MPW2"/>
<dbReference type="GeneID" id="7807554"/>
<dbReference type="KEGG" id="sis:LS215_1417"/>
<dbReference type="HOGENOM" id="CLU_034315_2_1_2"/>
<dbReference type="OrthoDB" id="8214at2157"/>
<dbReference type="UniPathway" id="UPA00035">
    <property type="reaction ID" value="UER00041"/>
</dbReference>
<dbReference type="Proteomes" id="UP000001747">
    <property type="component" value="Chromosome"/>
</dbReference>
<dbReference type="GO" id="GO:0005829">
    <property type="term" value="C:cytosol"/>
    <property type="evidence" value="ECO:0007669"/>
    <property type="project" value="TreeGrafter"/>
</dbReference>
<dbReference type="GO" id="GO:0004048">
    <property type="term" value="F:anthranilate phosphoribosyltransferase activity"/>
    <property type="evidence" value="ECO:0007669"/>
    <property type="project" value="UniProtKB-UniRule"/>
</dbReference>
<dbReference type="GO" id="GO:0000287">
    <property type="term" value="F:magnesium ion binding"/>
    <property type="evidence" value="ECO:0007669"/>
    <property type="project" value="UniProtKB-UniRule"/>
</dbReference>
<dbReference type="GO" id="GO:0000162">
    <property type="term" value="P:L-tryptophan biosynthetic process"/>
    <property type="evidence" value="ECO:0007669"/>
    <property type="project" value="UniProtKB-UniRule"/>
</dbReference>
<dbReference type="FunFam" id="3.40.1030.10:FF:000002">
    <property type="entry name" value="Anthranilate phosphoribosyltransferase"/>
    <property type="match status" value="1"/>
</dbReference>
<dbReference type="Gene3D" id="3.40.1030.10">
    <property type="entry name" value="Nucleoside phosphorylase/phosphoribosyltransferase catalytic domain"/>
    <property type="match status" value="1"/>
</dbReference>
<dbReference type="Gene3D" id="1.20.970.10">
    <property type="entry name" value="Transferase, Pyrimidine Nucleoside Phosphorylase, Chain C"/>
    <property type="match status" value="1"/>
</dbReference>
<dbReference type="HAMAP" id="MF_00211">
    <property type="entry name" value="TrpD"/>
    <property type="match status" value="1"/>
</dbReference>
<dbReference type="InterPro" id="IPR005940">
    <property type="entry name" value="Anthranilate_Pribosyl_Tfrase"/>
</dbReference>
<dbReference type="InterPro" id="IPR000312">
    <property type="entry name" value="Glycosyl_Trfase_fam3"/>
</dbReference>
<dbReference type="InterPro" id="IPR017459">
    <property type="entry name" value="Glycosyl_Trfase_fam3_N_dom"/>
</dbReference>
<dbReference type="InterPro" id="IPR036320">
    <property type="entry name" value="Glycosyl_Trfase_fam3_N_dom_sf"/>
</dbReference>
<dbReference type="InterPro" id="IPR035902">
    <property type="entry name" value="Nuc_phospho_transferase"/>
</dbReference>
<dbReference type="NCBIfam" id="TIGR01245">
    <property type="entry name" value="trpD"/>
    <property type="match status" value="1"/>
</dbReference>
<dbReference type="PANTHER" id="PTHR43285">
    <property type="entry name" value="ANTHRANILATE PHOSPHORIBOSYLTRANSFERASE"/>
    <property type="match status" value="1"/>
</dbReference>
<dbReference type="PANTHER" id="PTHR43285:SF2">
    <property type="entry name" value="ANTHRANILATE PHOSPHORIBOSYLTRANSFERASE"/>
    <property type="match status" value="1"/>
</dbReference>
<dbReference type="Pfam" id="PF02885">
    <property type="entry name" value="Glycos_trans_3N"/>
    <property type="match status" value="1"/>
</dbReference>
<dbReference type="Pfam" id="PF00591">
    <property type="entry name" value="Glycos_transf_3"/>
    <property type="match status" value="1"/>
</dbReference>
<dbReference type="SUPFAM" id="SSF52418">
    <property type="entry name" value="Nucleoside phosphorylase/phosphoribosyltransferase catalytic domain"/>
    <property type="match status" value="1"/>
</dbReference>
<dbReference type="SUPFAM" id="SSF47648">
    <property type="entry name" value="Nucleoside phosphorylase/phosphoribosyltransferase N-terminal domain"/>
    <property type="match status" value="1"/>
</dbReference>
<proteinExistence type="inferred from homology"/>
<sequence>MNINDILKKLINKSDLEIDEAEELAKAIIRGEVPEILVSAILVALRMKGESKNEIVGFARAMRELAIKIDVPNAIDTAGTGGDGLGTVNVSTASAILLSLINPVAKHGNRAVSGKSGSADVLEALGYNIIVPPERAKELIHKTNFVFLFAQYYHPAMKNVANVRKTLGIRTIFNILGPLTNPANAKYQLMGVFSKDHLDLLSKSAYELDFNKVILVHGEPGIDEVSPIGKTFMKIVSKRGIEEVKFDVTDFGISSIPIDKLIVNSAEDSAIKIVRAFLGKDEHVAEFIKINTAVALFALDKVSDFKEGYEYAKYLIENSVNKLNEIISLNGDLTKLKTIMVKSSG</sequence>
<gene>
    <name evidence="1" type="primary">trpD</name>
    <name type="ordered locus">LS215_1417</name>
</gene>
<feature type="chain" id="PRO_1000204191" description="Anthranilate phosphoribosyltransferase">
    <location>
        <begin position="1"/>
        <end position="345"/>
    </location>
</feature>
<feature type="binding site" evidence="1">
    <location>
        <position position="79"/>
    </location>
    <ligand>
        <name>5-phospho-alpha-D-ribose 1-diphosphate</name>
        <dbReference type="ChEBI" id="CHEBI:58017"/>
    </ligand>
</feature>
<feature type="binding site" evidence="1">
    <location>
        <position position="79"/>
    </location>
    <ligand>
        <name>anthranilate</name>
        <dbReference type="ChEBI" id="CHEBI:16567"/>
        <label>1</label>
    </ligand>
</feature>
<feature type="binding site" evidence="1">
    <location>
        <begin position="82"/>
        <end position="83"/>
    </location>
    <ligand>
        <name>5-phospho-alpha-D-ribose 1-diphosphate</name>
        <dbReference type="ChEBI" id="CHEBI:58017"/>
    </ligand>
</feature>
<feature type="binding site" evidence="1">
    <location>
        <position position="87"/>
    </location>
    <ligand>
        <name>5-phospho-alpha-D-ribose 1-diphosphate</name>
        <dbReference type="ChEBI" id="CHEBI:58017"/>
    </ligand>
</feature>
<feature type="binding site" evidence="1">
    <location>
        <begin position="89"/>
        <end position="92"/>
    </location>
    <ligand>
        <name>5-phospho-alpha-D-ribose 1-diphosphate</name>
        <dbReference type="ChEBI" id="CHEBI:58017"/>
    </ligand>
</feature>
<feature type="binding site" evidence="1">
    <location>
        <position position="91"/>
    </location>
    <ligand>
        <name>Mg(2+)</name>
        <dbReference type="ChEBI" id="CHEBI:18420"/>
        <label>1</label>
    </ligand>
</feature>
<feature type="binding site" evidence="1">
    <location>
        <begin position="106"/>
        <end position="114"/>
    </location>
    <ligand>
        <name>5-phospho-alpha-D-ribose 1-diphosphate</name>
        <dbReference type="ChEBI" id="CHEBI:58017"/>
    </ligand>
</feature>
<feature type="binding site" evidence="1">
    <location>
        <position position="109"/>
    </location>
    <ligand>
        <name>anthranilate</name>
        <dbReference type="ChEBI" id="CHEBI:16567"/>
        <label>1</label>
    </ligand>
</feature>
<feature type="binding site" evidence="1">
    <location>
        <position position="118"/>
    </location>
    <ligand>
        <name>5-phospho-alpha-D-ribose 1-diphosphate</name>
        <dbReference type="ChEBI" id="CHEBI:58017"/>
    </ligand>
</feature>
<feature type="binding site" evidence="1">
    <location>
        <position position="164"/>
    </location>
    <ligand>
        <name>anthranilate</name>
        <dbReference type="ChEBI" id="CHEBI:16567"/>
        <label>2</label>
    </ligand>
</feature>
<feature type="binding site" evidence="1">
    <location>
        <position position="223"/>
    </location>
    <ligand>
        <name>Mg(2+)</name>
        <dbReference type="ChEBI" id="CHEBI:18420"/>
        <label>2</label>
    </ligand>
</feature>
<feature type="binding site" evidence="1">
    <location>
        <position position="224"/>
    </location>
    <ligand>
        <name>Mg(2+)</name>
        <dbReference type="ChEBI" id="CHEBI:18420"/>
        <label>1</label>
    </ligand>
</feature>
<feature type="binding site" evidence="1">
    <location>
        <position position="224"/>
    </location>
    <ligand>
        <name>Mg(2+)</name>
        <dbReference type="ChEBI" id="CHEBI:18420"/>
        <label>2</label>
    </ligand>
</feature>
<organism>
    <name type="scientific">Saccharolobus islandicus (strain L.S.2.15 / Lassen #1)</name>
    <name type="common">Sulfolobus islandicus</name>
    <dbReference type="NCBI Taxonomy" id="429572"/>
    <lineage>
        <taxon>Archaea</taxon>
        <taxon>Thermoproteota</taxon>
        <taxon>Thermoprotei</taxon>
        <taxon>Sulfolobales</taxon>
        <taxon>Sulfolobaceae</taxon>
        <taxon>Saccharolobus</taxon>
    </lineage>
</organism>
<comment type="function">
    <text evidence="1">Catalyzes the transfer of the phosphoribosyl group of 5-phosphorylribose-1-pyrophosphate (PRPP) to anthranilate to yield N-(5'-phosphoribosyl)-anthranilate (PRA).</text>
</comment>
<comment type="catalytic activity">
    <reaction evidence="1">
        <text>N-(5-phospho-beta-D-ribosyl)anthranilate + diphosphate = 5-phospho-alpha-D-ribose 1-diphosphate + anthranilate</text>
        <dbReference type="Rhea" id="RHEA:11768"/>
        <dbReference type="ChEBI" id="CHEBI:16567"/>
        <dbReference type="ChEBI" id="CHEBI:18277"/>
        <dbReference type="ChEBI" id="CHEBI:33019"/>
        <dbReference type="ChEBI" id="CHEBI:58017"/>
        <dbReference type="EC" id="2.4.2.18"/>
    </reaction>
</comment>
<comment type="cofactor">
    <cofactor evidence="1">
        <name>Mg(2+)</name>
        <dbReference type="ChEBI" id="CHEBI:18420"/>
    </cofactor>
    <text evidence="1">Binds 2 magnesium ions per monomer.</text>
</comment>
<comment type="pathway">
    <text evidence="1">Amino-acid biosynthesis; L-tryptophan biosynthesis; L-tryptophan from chorismate: step 2/5.</text>
</comment>
<comment type="subunit">
    <text evidence="1">Homodimer.</text>
</comment>
<comment type="similarity">
    <text evidence="1">Belongs to the anthranilate phosphoribosyltransferase family.</text>
</comment>
<keyword id="KW-0028">Amino-acid biosynthesis</keyword>
<keyword id="KW-0057">Aromatic amino acid biosynthesis</keyword>
<keyword id="KW-0328">Glycosyltransferase</keyword>
<keyword id="KW-0460">Magnesium</keyword>
<keyword id="KW-0479">Metal-binding</keyword>
<keyword id="KW-0808">Transferase</keyword>
<keyword id="KW-0822">Tryptophan biosynthesis</keyword>
<reference key="1">
    <citation type="journal article" date="2009" name="Proc. Natl. Acad. Sci. U.S.A.">
        <title>Biogeography of the Sulfolobus islandicus pan-genome.</title>
        <authorList>
            <person name="Reno M.L."/>
            <person name="Held N.L."/>
            <person name="Fields C.J."/>
            <person name="Burke P.V."/>
            <person name="Whitaker R.J."/>
        </authorList>
    </citation>
    <scope>NUCLEOTIDE SEQUENCE [LARGE SCALE GENOMIC DNA]</scope>
    <source>
        <strain>L.S.2.15 / Lassen #1</strain>
    </source>
</reference>